<sequence length="530" mass="58539">MTTIAAVSPLDGRLLGHFPVSKPALIQQQLTKSRRAALLWRELPVTERVKRLSPLKKQLLDNLDRLCETIRLSTGKVRTEALLGEIYPVLDLLAYYQKRAPRILRTRAVSTSPFAFPAATARIERRPYGVVAVISPWNYPFHLSVAPLLTALLAGNAVILKPSELCLPVGQLIVDLFATLDLPDGLVQWVIGDGQTGAELIDARPDLVFFTGGLQTGRAVMQRAARHPIPVMLELGGKDTMLVLADADLKRASAAALYGAFCNSGQVCVSVERLYVQQACFAEFLAMLLKGLSKLKVGHDPHGDVGVMTSARQIDIVQAHYEDAIAQGAKASGPLLRDGNVVQPVVLWDVHHGMKVMREETFGPLLPVMPFSDEAEAIKLANDSDLGLNASIWSQDIIKAERLAGQLDVGNWAINDVLKNVGHSGLPFGGVKQSGFGRYHGAEGLLNFSYPVSGLTNRSRLPKEPNWFPYSASGYENFKGFLDFIYGEDSMLQRGRRNQQALQAFREFSIFDWTQRWQNLKLLFSWTRDD</sequence>
<name>ALD_METSP</name>
<dbReference type="EC" id="1.2.99.10" evidence="6"/>
<dbReference type="EMBL" id="AY841893">
    <property type="protein sequence ID" value="AAX46184.1"/>
    <property type="molecule type" value="Genomic_DNA"/>
</dbReference>
<dbReference type="SMR" id="Q4VKV0"/>
<dbReference type="KEGG" id="ag:AAX46184"/>
<dbReference type="BioCyc" id="MetaCyc:MONOMER-16326"/>
<dbReference type="BRENDA" id="1.2.99.10">
    <property type="organism ID" value="3315"/>
</dbReference>
<dbReference type="GO" id="GO:0016620">
    <property type="term" value="F:oxidoreductase activity, acting on the aldehyde or oxo group of donors, NAD or NADP as acceptor"/>
    <property type="evidence" value="ECO:0007669"/>
    <property type="project" value="InterPro"/>
</dbReference>
<dbReference type="GO" id="GO:0006081">
    <property type="term" value="P:aldehyde metabolic process"/>
    <property type="evidence" value="ECO:0007669"/>
    <property type="project" value="InterPro"/>
</dbReference>
<dbReference type="GO" id="GO:0016117">
    <property type="term" value="P:carotenoid biosynthetic process"/>
    <property type="evidence" value="ECO:0007669"/>
    <property type="project" value="UniProtKB-KW"/>
</dbReference>
<dbReference type="CDD" id="cd07099">
    <property type="entry name" value="ALDH_DDALDH"/>
    <property type="match status" value="1"/>
</dbReference>
<dbReference type="Gene3D" id="3.40.605.10">
    <property type="entry name" value="Aldehyde Dehydrogenase, Chain A, domain 1"/>
    <property type="match status" value="1"/>
</dbReference>
<dbReference type="Gene3D" id="3.40.309.10">
    <property type="entry name" value="Aldehyde Dehydrogenase, Chain A, domain 2"/>
    <property type="match status" value="1"/>
</dbReference>
<dbReference type="InterPro" id="IPR016161">
    <property type="entry name" value="Ald_DH/histidinol_DH"/>
</dbReference>
<dbReference type="InterPro" id="IPR016163">
    <property type="entry name" value="Ald_DH_C"/>
</dbReference>
<dbReference type="InterPro" id="IPR029510">
    <property type="entry name" value="Ald_DH_CS_GLU"/>
</dbReference>
<dbReference type="InterPro" id="IPR016162">
    <property type="entry name" value="Ald_DH_N"/>
</dbReference>
<dbReference type="InterPro" id="IPR015590">
    <property type="entry name" value="Aldehyde_DH_dom"/>
</dbReference>
<dbReference type="InterPro" id="IPR012394">
    <property type="entry name" value="Aldehyde_DH_NAD(P)"/>
</dbReference>
<dbReference type="PANTHER" id="PTHR11699">
    <property type="entry name" value="ALDEHYDE DEHYDROGENASE-RELATED"/>
    <property type="match status" value="1"/>
</dbReference>
<dbReference type="Pfam" id="PF00171">
    <property type="entry name" value="Aldedh"/>
    <property type="match status" value="1"/>
</dbReference>
<dbReference type="PIRSF" id="PIRSF036492">
    <property type="entry name" value="ALDH"/>
    <property type="match status" value="1"/>
</dbReference>
<dbReference type="SUPFAM" id="SSF53720">
    <property type="entry name" value="ALDH-like"/>
    <property type="match status" value="1"/>
</dbReference>
<dbReference type="PROSITE" id="PS00687">
    <property type="entry name" value="ALDEHYDE_DEHYDR_GLU"/>
    <property type="match status" value="1"/>
</dbReference>
<comment type="function">
    <text evidence="3">Involved in the biosynthesis of C30 carotenoids. Catalyzes the oxidation of 4,4'-diapolycopene-4,4'-dial to yield 4,4'-diapolycopene-4,4'-dioic acid. Also able to catalyze the oxidation of 4,4'-diapolycopen-4-al to yield 4,4'-diapolycopen-4-oic acid.</text>
</comment>
<comment type="catalytic activity">
    <reaction evidence="6">
        <text>all-trans-4,4'-diapolycopen-4-al + A + H2O = all-trans-4,4'-diapolycopen-4-oate + AH2 + H(+)</text>
        <dbReference type="Rhea" id="RHEA:44716"/>
        <dbReference type="ChEBI" id="CHEBI:13193"/>
        <dbReference type="ChEBI" id="CHEBI:15377"/>
        <dbReference type="ChEBI" id="CHEBI:15378"/>
        <dbReference type="ChEBI" id="CHEBI:17499"/>
        <dbReference type="ChEBI" id="CHEBI:138599"/>
        <dbReference type="ChEBI" id="CHEBI:138600"/>
        <dbReference type="EC" id="1.2.99.10"/>
    </reaction>
</comment>
<comment type="catalytic activity">
    <reaction evidence="6">
        <text>all-trans-4,4'-diapolycopene-4,4'-dial + 2 A + 2 H2O = all-trans-4,4'-diapolycopene-4,4'-dioate + 2 AH2 + 2 H(+)</text>
        <dbReference type="Rhea" id="RHEA:42380"/>
        <dbReference type="ChEBI" id="CHEBI:13193"/>
        <dbReference type="ChEBI" id="CHEBI:15377"/>
        <dbReference type="ChEBI" id="CHEBI:15378"/>
        <dbReference type="ChEBI" id="CHEBI:17499"/>
        <dbReference type="ChEBI" id="CHEBI:62450"/>
        <dbReference type="ChEBI" id="CHEBI:79063"/>
        <dbReference type="EC" id="1.2.99.10"/>
    </reaction>
</comment>
<comment type="pathway">
    <text evidence="6">Carotenoid biosynthesis.</text>
</comment>
<comment type="disruption phenotype">
    <text evidence="3">Cells lacking this gene produce 4,4'-diapolycopene dialdehyde in addition to the 4,4'-diapophytoene precursor.</text>
</comment>
<comment type="similarity">
    <text evidence="5">Belongs to the aldehyde dehydrogenase family.</text>
</comment>
<evidence type="ECO:0000255" key="1">
    <source>
        <dbReference type="PROSITE-ProRule" id="PRU10007"/>
    </source>
</evidence>
<evidence type="ECO:0000255" key="2">
    <source>
        <dbReference type="PROSITE-ProRule" id="PRU10008"/>
    </source>
</evidence>
<evidence type="ECO:0000269" key="3">
    <source>
    </source>
</evidence>
<evidence type="ECO:0000303" key="4">
    <source>
    </source>
</evidence>
<evidence type="ECO:0000305" key="5"/>
<evidence type="ECO:0000305" key="6">
    <source>
    </source>
</evidence>
<evidence type="ECO:0000312" key="7">
    <source>
        <dbReference type="EMBL" id="AAX46184.1"/>
    </source>
</evidence>
<accession>Q4VKV0</accession>
<keyword id="KW-0125">Carotenoid biosynthesis</keyword>
<keyword id="KW-0560">Oxidoreductase</keyword>
<proteinExistence type="evidence at protein level"/>
<gene>
    <name evidence="4" type="primary">ald</name>
    <name evidence="5" type="synonym">crtNc</name>
</gene>
<organism>
    <name type="scientific">Methylomonas sp</name>
    <dbReference type="NCBI Taxonomy" id="418"/>
    <lineage>
        <taxon>Bacteria</taxon>
        <taxon>Pseudomonadati</taxon>
        <taxon>Pseudomonadota</taxon>
        <taxon>Gammaproteobacteria</taxon>
        <taxon>Methylococcales</taxon>
        <taxon>Methylococcaceae</taxon>
        <taxon>Methylomonas</taxon>
    </lineage>
</organism>
<reference key="1">
    <citation type="journal article" date="2005" name="Appl. Environ. Microbiol.">
        <title>Novel carotenoid oxidase involved in biosynthesis of 4,4'-diapolycopene dialdehyde.</title>
        <authorList>
            <person name="Tao L."/>
            <person name="Schenzle A."/>
            <person name="Odom J.M."/>
            <person name="Cheng Q."/>
        </authorList>
    </citation>
    <scope>NUCLEOTIDE SEQUENCE [GENOMIC DNA]</scope>
    <scope>FUNCTION</scope>
    <scope>CATALYTIC ACTIVITY</scope>
    <scope>DISRUPTION PHENOTYPE</scope>
    <scope>PATHWAY</scope>
    <source>
        <strain evidence="7">16a</strain>
    </source>
</reference>
<protein>
    <recommendedName>
        <fullName evidence="4">4,4'-diapolycopene aldehyde oxidase</fullName>
        <ecNumber evidence="6">1.2.99.10</ecNumber>
    </recommendedName>
    <alternativeName>
        <fullName evidence="5">4,4'-diapolycopenedial dehydrogenase</fullName>
    </alternativeName>
    <alternativeName>
        <fullName evidence="5">4,4'-diapolycopenoate synthase</fullName>
    </alternativeName>
</protein>
<feature type="chain" id="PRO_0000443512" description="4,4'-diapolycopene aldehyde oxidase">
    <location>
        <begin position="1"/>
        <end position="530"/>
    </location>
</feature>
<feature type="active site" evidence="1">
    <location>
        <position position="234"/>
    </location>
</feature>
<feature type="active site" evidence="2">
    <location>
        <position position="268"/>
    </location>
</feature>